<comment type="function">
    <text evidence="2">Transaldolase is important for the balance of metabolites in the pentose-phosphate pathway.</text>
</comment>
<comment type="catalytic activity">
    <reaction evidence="2">
        <text>D-sedoheptulose 7-phosphate + D-glyceraldehyde 3-phosphate = D-erythrose 4-phosphate + beta-D-fructose 6-phosphate</text>
        <dbReference type="Rhea" id="RHEA:17053"/>
        <dbReference type="ChEBI" id="CHEBI:16897"/>
        <dbReference type="ChEBI" id="CHEBI:57483"/>
        <dbReference type="ChEBI" id="CHEBI:57634"/>
        <dbReference type="ChEBI" id="CHEBI:59776"/>
        <dbReference type="EC" id="2.2.1.2"/>
    </reaction>
</comment>
<comment type="pathway">
    <text evidence="2">Carbohydrate degradation; pentose phosphate pathway; D-glyceraldehyde 3-phosphate and beta-D-fructose 6-phosphate from D-ribose 5-phosphate and D-xylulose 5-phosphate (non-oxidative stage): step 2/3.</text>
</comment>
<comment type="subunit">
    <text evidence="1">Homodimer.</text>
</comment>
<comment type="subcellular location">
    <subcellularLocation>
        <location evidence="2">Cytoplasm</location>
    </subcellularLocation>
</comment>
<comment type="similarity">
    <text evidence="2">Belongs to the transaldolase family. Type 1 subfamily.</text>
</comment>
<reference key="1">
    <citation type="submission" date="2008-02" db="EMBL/GenBank/DDBJ databases">
        <title>Complete sequence of Yersinia pseudotuberculosis YPIII.</title>
        <authorList>
            <consortium name="US DOE Joint Genome Institute"/>
            <person name="Copeland A."/>
            <person name="Lucas S."/>
            <person name="Lapidus A."/>
            <person name="Glavina del Rio T."/>
            <person name="Dalin E."/>
            <person name="Tice H."/>
            <person name="Bruce D."/>
            <person name="Goodwin L."/>
            <person name="Pitluck S."/>
            <person name="Munk A.C."/>
            <person name="Brettin T."/>
            <person name="Detter J.C."/>
            <person name="Han C."/>
            <person name="Tapia R."/>
            <person name="Schmutz J."/>
            <person name="Larimer F."/>
            <person name="Land M."/>
            <person name="Hauser L."/>
            <person name="Challacombe J.F."/>
            <person name="Green L."/>
            <person name="Lindler L.E."/>
            <person name="Nikolich M.P."/>
            <person name="Richardson P."/>
        </authorList>
    </citation>
    <scope>NUCLEOTIDE SEQUENCE [LARGE SCALE GENOMIC DNA]</scope>
    <source>
        <strain>YPIII</strain>
    </source>
</reference>
<dbReference type="EC" id="2.2.1.2" evidence="2"/>
<dbReference type="EMBL" id="CP000950">
    <property type="protein sequence ID" value="ACA69866.1"/>
    <property type="molecule type" value="Genomic_DNA"/>
</dbReference>
<dbReference type="RefSeq" id="WP_012304607.1">
    <property type="nucleotide sequence ID" value="NZ_CP009792.1"/>
</dbReference>
<dbReference type="SMR" id="B1JL09"/>
<dbReference type="KEGG" id="ypy:YPK_3599"/>
<dbReference type="PATRIC" id="fig|502800.11.peg.4349"/>
<dbReference type="UniPathway" id="UPA00115">
    <property type="reaction ID" value="UER00414"/>
</dbReference>
<dbReference type="GO" id="GO:0005829">
    <property type="term" value="C:cytosol"/>
    <property type="evidence" value="ECO:0007669"/>
    <property type="project" value="TreeGrafter"/>
</dbReference>
<dbReference type="GO" id="GO:0004801">
    <property type="term" value="F:transaldolase activity"/>
    <property type="evidence" value="ECO:0000250"/>
    <property type="project" value="UniProtKB"/>
</dbReference>
<dbReference type="GO" id="GO:0005975">
    <property type="term" value="P:carbohydrate metabolic process"/>
    <property type="evidence" value="ECO:0007669"/>
    <property type="project" value="InterPro"/>
</dbReference>
<dbReference type="GO" id="GO:0006098">
    <property type="term" value="P:pentose-phosphate shunt"/>
    <property type="evidence" value="ECO:0007669"/>
    <property type="project" value="UniProtKB-UniRule"/>
</dbReference>
<dbReference type="CDD" id="cd00957">
    <property type="entry name" value="Transaldolase_TalAB"/>
    <property type="match status" value="1"/>
</dbReference>
<dbReference type="FunFam" id="3.20.20.70:FF:000002">
    <property type="entry name" value="Transaldolase"/>
    <property type="match status" value="1"/>
</dbReference>
<dbReference type="Gene3D" id="3.20.20.70">
    <property type="entry name" value="Aldolase class I"/>
    <property type="match status" value="1"/>
</dbReference>
<dbReference type="HAMAP" id="MF_00492">
    <property type="entry name" value="Transaldolase_1"/>
    <property type="match status" value="1"/>
</dbReference>
<dbReference type="InterPro" id="IPR013785">
    <property type="entry name" value="Aldolase_TIM"/>
</dbReference>
<dbReference type="InterPro" id="IPR001585">
    <property type="entry name" value="TAL/FSA"/>
</dbReference>
<dbReference type="InterPro" id="IPR004730">
    <property type="entry name" value="Transaldolase_1"/>
</dbReference>
<dbReference type="InterPro" id="IPR018225">
    <property type="entry name" value="Transaldolase_AS"/>
</dbReference>
<dbReference type="NCBIfam" id="NF009001">
    <property type="entry name" value="PRK12346.1"/>
    <property type="match status" value="1"/>
</dbReference>
<dbReference type="NCBIfam" id="TIGR00874">
    <property type="entry name" value="talAB"/>
    <property type="match status" value="1"/>
</dbReference>
<dbReference type="PANTHER" id="PTHR10683">
    <property type="entry name" value="TRANSALDOLASE"/>
    <property type="match status" value="1"/>
</dbReference>
<dbReference type="PANTHER" id="PTHR10683:SF18">
    <property type="entry name" value="TRANSALDOLASE"/>
    <property type="match status" value="1"/>
</dbReference>
<dbReference type="Pfam" id="PF00923">
    <property type="entry name" value="TAL_FSA"/>
    <property type="match status" value="1"/>
</dbReference>
<dbReference type="SUPFAM" id="SSF51569">
    <property type="entry name" value="Aldolase"/>
    <property type="match status" value="1"/>
</dbReference>
<dbReference type="PROSITE" id="PS01054">
    <property type="entry name" value="TRANSALDOLASE_1"/>
    <property type="match status" value="1"/>
</dbReference>
<dbReference type="PROSITE" id="PS00958">
    <property type="entry name" value="TRANSALDOLASE_2"/>
    <property type="match status" value="1"/>
</dbReference>
<gene>
    <name evidence="2" type="primary">tal</name>
    <name type="ordered locus">YPK_3599</name>
</gene>
<name>TAL_YERPY</name>
<sequence>MTDKLTSLRQITTVVADTGDIAAMKLYQPQDATTNPSIILNAAQIPEYRKLIDEAITWAREQSSDHAQQIVDATDKLAVNIGLEILKLIPGRISTEVDARLSYDTVASVAKAKRLIKLYNEAGISNDRILIKLASTWQGIRAAEQLEKEGINCNLTLLFSFAQARACAEAGVFLISPFVGRILDWYKANGDQKEFAPSEDPGVVSVTEIYQYYKKHGYKTVVMGASFRNLGEIIELAGCDRLTIAPSLLKELAESEGPVERKLAYTGEIQAKPAPLTEAEFYWQHNQDPMAVDKLADGIRKFAIDQGKLEKMISDLL</sequence>
<proteinExistence type="inferred from homology"/>
<organism>
    <name type="scientific">Yersinia pseudotuberculosis serotype O:3 (strain YPIII)</name>
    <dbReference type="NCBI Taxonomy" id="502800"/>
    <lineage>
        <taxon>Bacteria</taxon>
        <taxon>Pseudomonadati</taxon>
        <taxon>Pseudomonadota</taxon>
        <taxon>Gammaproteobacteria</taxon>
        <taxon>Enterobacterales</taxon>
        <taxon>Yersiniaceae</taxon>
        <taxon>Yersinia</taxon>
    </lineage>
</organism>
<keyword id="KW-0963">Cytoplasm</keyword>
<keyword id="KW-0570">Pentose shunt</keyword>
<keyword id="KW-0704">Schiff base</keyword>
<keyword id="KW-0808">Transferase</keyword>
<accession>B1JL09</accession>
<protein>
    <recommendedName>
        <fullName evidence="2">Transaldolase</fullName>
        <ecNumber evidence="2">2.2.1.2</ecNumber>
    </recommendedName>
</protein>
<evidence type="ECO:0000250" key="1"/>
<evidence type="ECO:0000255" key="2">
    <source>
        <dbReference type="HAMAP-Rule" id="MF_00492"/>
    </source>
</evidence>
<feature type="chain" id="PRO_1000126263" description="Transaldolase">
    <location>
        <begin position="1"/>
        <end position="317"/>
    </location>
</feature>
<feature type="active site" description="Schiff-base intermediate with substrate" evidence="2">
    <location>
        <position position="132"/>
    </location>
</feature>